<protein>
    <recommendedName>
        <fullName evidence="3">Periviscerokinin-2</fullName>
        <shortName evidence="3">PerSu-PVK-2</shortName>
    </recommendedName>
</protein>
<organism>
    <name type="scientific">Perisphaeria cf. substylifera (strain SR-2005)</name>
    <name type="common">Cockroach</name>
    <dbReference type="NCBI Taxonomy" id="348760"/>
    <lineage>
        <taxon>Eukaryota</taxon>
        <taxon>Metazoa</taxon>
        <taxon>Ecdysozoa</taxon>
        <taxon>Arthropoda</taxon>
        <taxon>Hexapoda</taxon>
        <taxon>Insecta</taxon>
        <taxon>Pterygota</taxon>
        <taxon>Neoptera</taxon>
        <taxon>Polyneoptera</taxon>
        <taxon>Dictyoptera</taxon>
        <taxon>Blattodea</taxon>
        <taxon>Blaberoidea</taxon>
        <taxon>Blaberidae</taxon>
        <taxon>Perisphaerinae</taxon>
        <taxon>Perisphaeria</taxon>
    </lineage>
</organism>
<accession>P85728</accession>
<evidence type="ECO:0000255" key="1"/>
<evidence type="ECO:0000269" key="2">
    <source>
    </source>
</evidence>
<evidence type="ECO:0000303" key="3">
    <source>
    </source>
</evidence>
<evidence type="ECO:0000305" key="4"/>
<dbReference type="GO" id="GO:0005576">
    <property type="term" value="C:extracellular region"/>
    <property type="evidence" value="ECO:0007669"/>
    <property type="project" value="UniProtKB-SubCell"/>
</dbReference>
<dbReference type="GO" id="GO:0007218">
    <property type="term" value="P:neuropeptide signaling pathway"/>
    <property type="evidence" value="ECO:0007669"/>
    <property type="project" value="UniProtKB-KW"/>
</dbReference>
<dbReference type="InterPro" id="IPR013231">
    <property type="entry name" value="Periviscerokinin"/>
</dbReference>
<dbReference type="Pfam" id="PF08259">
    <property type="entry name" value="Periviscerokin"/>
    <property type="match status" value="1"/>
</dbReference>
<reference evidence="4" key="1">
    <citation type="journal article" date="2009" name="BMC Evol. Biol.">
        <title>A proteomic approach for studying insect phylogeny: CAPA peptides of ancient insect taxa (Dictyoptera, Blattoptera) as a test case.</title>
        <authorList>
            <person name="Roth S."/>
            <person name="Fromm B."/>
            <person name="Gaede G."/>
            <person name="Predel R."/>
        </authorList>
    </citation>
    <scope>PROTEIN SEQUENCE</scope>
    <scope>AMIDATION AT VAL-11</scope>
    <source>
        <tissue evidence="2">Abdominal perisympathetic organs</tissue>
    </source>
</reference>
<sequence>GSSGLISMPRV</sequence>
<keyword id="KW-0027">Amidation</keyword>
<keyword id="KW-0903">Direct protein sequencing</keyword>
<keyword id="KW-0527">Neuropeptide</keyword>
<keyword id="KW-0964">Secreted</keyword>
<proteinExistence type="evidence at protein level"/>
<name>PVK2_PERSR</name>
<feature type="peptide" id="PRO_0000378805" description="Periviscerokinin-2" evidence="2">
    <location>
        <begin position="1"/>
        <end position="11"/>
    </location>
</feature>
<feature type="modified residue" description="Valine amide" evidence="2">
    <location>
        <position position="11"/>
    </location>
</feature>
<comment type="function">
    <text evidence="4">Mediates visceral muscle contractile activity (myotropic activity).</text>
</comment>
<comment type="subcellular location">
    <subcellularLocation>
        <location evidence="4">Secreted</location>
    </subcellularLocation>
</comment>
<comment type="similarity">
    <text evidence="1">Belongs to the periviscerokinin family.</text>
</comment>